<accession>B0UPN1</accession>
<organism>
    <name type="scientific">Methylobacterium sp. (strain 4-46)</name>
    <dbReference type="NCBI Taxonomy" id="426117"/>
    <lineage>
        <taxon>Bacteria</taxon>
        <taxon>Pseudomonadati</taxon>
        <taxon>Pseudomonadota</taxon>
        <taxon>Alphaproteobacteria</taxon>
        <taxon>Hyphomicrobiales</taxon>
        <taxon>Methylobacteriaceae</taxon>
        <taxon>Methylobacterium</taxon>
    </lineage>
</organism>
<sequence>MGTDGMAGRAILIAGPTASGKSALALALARARGGVVINADSMQVYADLRVLTARPNPAEEAQAPHRLYGSVDGAVNFSVGHYLAAVGEVLREVWAAGGLPIVVGGTGLYFKALLEGLSEIPPVPEAVRTALRAEAEGRETAALHADLARRDPEGAARLGAHDRLRVLRALEVLAATGRPLSAFQGSRRPGPLAGMPCDKLFLVPDRALLRARIDARFLAMMEEGALDEVARLRARRLDPMLPVMRAHGVPGLIAFLDGALTREEAVARGQADTRAYAKRQVTWFRHQAGAGWRWLAPEAAMREAGG</sequence>
<proteinExistence type="inferred from homology"/>
<protein>
    <recommendedName>
        <fullName evidence="1">tRNA dimethylallyltransferase</fullName>
        <ecNumber evidence="1">2.5.1.75</ecNumber>
    </recommendedName>
    <alternativeName>
        <fullName evidence="1">Dimethylallyl diphosphate:tRNA dimethylallyltransferase</fullName>
        <shortName evidence="1">DMAPP:tRNA dimethylallyltransferase</shortName>
        <shortName evidence="1">DMATase</shortName>
    </alternativeName>
    <alternativeName>
        <fullName evidence="1">Isopentenyl-diphosphate:tRNA isopentenyltransferase</fullName>
        <shortName evidence="1">IPP transferase</shortName>
        <shortName evidence="1">IPPT</shortName>
        <shortName evidence="1">IPTase</shortName>
    </alternativeName>
</protein>
<comment type="function">
    <text evidence="1">Catalyzes the transfer of a dimethylallyl group onto the adenine at position 37 in tRNAs that read codons beginning with uridine, leading to the formation of N6-(dimethylallyl)adenosine (i(6)A).</text>
</comment>
<comment type="catalytic activity">
    <reaction evidence="1">
        <text>adenosine(37) in tRNA + dimethylallyl diphosphate = N(6)-dimethylallyladenosine(37) in tRNA + diphosphate</text>
        <dbReference type="Rhea" id="RHEA:26482"/>
        <dbReference type="Rhea" id="RHEA-COMP:10162"/>
        <dbReference type="Rhea" id="RHEA-COMP:10375"/>
        <dbReference type="ChEBI" id="CHEBI:33019"/>
        <dbReference type="ChEBI" id="CHEBI:57623"/>
        <dbReference type="ChEBI" id="CHEBI:74411"/>
        <dbReference type="ChEBI" id="CHEBI:74415"/>
        <dbReference type="EC" id="2.5.1.75"/>
    </reaction>
</comment>
<comment type="cofactor">
    <cofactor evidence="1">
        <name>Mg(2+)</name>
        <dbReference type="ChEBI" id="CHEBI:18420"/>
    </cofactor>
</comment>
<comment type="subunit">
    <text evidence="1">Monomer.</text>
</comment>
<comment type="similarity">
    <text evidence="1">Belongs to the IPP transferase family.</text>
</comment>
<name>MIAA_METS4</name>
<feature type="chain" id="PRO_0000377221" description="tRNA dimethylallyltransferase">
    <location>
        <begin position="1"/>
        <end position="306"/>
    </location>
</feature>
<feature type="region of interest" description="Interaction with substrate tRNA" evidence="1">
    <location>
        <begin position="40"/>
        <end position="43"/>
    </location>
</feature>
<feature type="binding site" evidence="1">
    <location>
        <begin position="15"/>
        <end position="22"/>
    </location>
    <ligand>
        <name>ATP</name>
        <dbReference type="ChEBI" id="CHEBI:30616"/>
    </ligand>
</feature>
<feature type="binding site" evidence="1">
    <location>
        <begin position="17"/>
        <end position="22"/>
    </location>
    <ligand>
        <name>substrate</name>
    </ligand>
</feature>
<feature type="site" description="Interaction with substrate tRNA" evidence="1">
    <location>
        <position position="106"/>
    </location>
</feature>
<feature type="site" description="Interaction with substrate tRNA" evidence="1">
    <location>
        <position position="128"/>
    </location>
</feature>
<evidence type="ECO:0000255" key="1">
    <source>
        <dbReference type="HAMAP-Rule" id="MF_00185"/>
    </source>
</evidence>
<dbReference type="EC" id="2.5.1.75" evidence="1"/>
<dbReference type="EMBL" id="CP000943">
    <property type="protein sequence ID" value="ACA20457.1"/>
    <property type="molecule type" value="Genomic_DNA"/>
</dbReference>
<dbReference type="RefSeq" id="WP_012335835.1">
    <property type="nucleotide sequence ID" value="NC_010511.1"/>
</dbReference>
<dbReference type="SMR" id="B0UPN1"/>
<dbReference type="STRING" id="426117.M446_6189"/>
<dbReference type="KEGG" id="met:M446_6189"/>
<dbReference type="eggNOG" id="COG0324">
    <property type="taxonomic scope" value="Bacteria"/>
</dbReference>
<dbReference type="HOGENOM" id="CLU_032616_0_1_5"/>
<dbReference type="GO" id="GO:0005524">
    <property type="term" value="F:ATP binding"/>
    <property type="evidence" value="ECO:0007669"/>
    <property type="project" value="UniProtKB-UniRule"/>
</dbReference>
<dbReference type="GO" id="GO:0052381">
    <property type="term" value="F:tRNA dimethylallyltransferase activity"/>
    <property type="evidence" value="ECO:0007669"/>
    <property type="project" value="UniProtKB-UniRule"/>
</dbReference>
<dbReference type="GO" id="GO:0006400">
    <property type="term" value="P:tRNA modification"/>
    <property type="evidence" value="ECO:0007669"/>
    <property type="project" value="TreeGrafter"/>
</dbReference>
<dbReference type="Gene3D" id="1.10.20.140">
    <property type="match status" value="1"/>
</dbReference>
<dbReference type="Gene3D" id="3.40.50.300">
    <property type="entry name" value="P-loop containing nucleotide triphosphate hydrolases"/>
    <property type="match status" value="1"/>
</dbReference>
<dbReference type="HAMAP" id="MF_00185">
    <property type="entry name" value="IPP_trans"/>
    <property type="match status" value="1"/>
</dbReference>
<dbReference type="InterPro" id="IPR039657">
    <property type="entry name" value="Dimethylallyltransferase"/>
</dbReference>
<dbReference type="InterPro" id="IPR018022">
    <property type="entry name" value="IPT"/>
</dbReference>
<dbReference type="InterPro" id="IPR027417">
    <property type="entry name" value="P-loop_NTPase"/>
</dbReference>
<dbReference type="NCBIfam" id="TIGR00174">
    <property type="entry name" value="miaA"/>
    <property type="match status" value="1"/>
</dbReference>
<dbReference type="PANTHER" id="PTHR11088">
    <property type="entry name" value="TRNA DIMETHYLALLYLTRANSFERASE"/>
    <property type="match status" value="1"/>
</dbReference>
<dbReference type="PANTHER" id="PTHR11088:SF60">
    <property type="entry name" value="TRNA DIMETHYLALLYLTRANSFERASE"/>
    <property type="match status" value="1"/>
</dbReference>
<dbReference type="Pfam" id="PF01715">
    <property type="entry name" value="IPPT"/>
    <property type="match status" value="1"/>
</dbReference>
<dbReference type="SUPFAM" id="SSF52540">
    <property type="entry name" value="P-loop containing nucleoside triphosphate hydrolases"/>
    <property type="match status" value="2"/>
</dbReference>
<reference key="1">
    <citation type="submission" date="2008-02" db="EMBL/GenBank/DDBJ databases">
        <title>Complete sequence of chromosome of Methylobacterium sp. 4-46.</title>
        <authorList>
            <consortium name="US DOE Joint Genome Institute"/>
            <person name="Copeland A."/>
            <person name="Lucas S."/>
            <person name="Lapidus A."/>
            <person name="Glavina del Rio T."/>
            <person name="Dalin E."/>
            <person name="Tice H."/>
            <person name="Bruce D."/>
            <person name="Goodwin L."/>
            <person name="Pitluck S."/>
            <person name="Chertkov O."/>
            <person name="Brettin T."/>
            <person name="Detter J.C."/>
            <person name="Han C."/>
            <person name="Kuske C.R."/>
            <person name="Schmutz J."/>
            <person name="Larimer F."/>
            <person name="Land M."/>
            <person name="Hauser L."/>
            <person name="Kyrpides N."/>
            <person name="Ivanova N."/>
            <person name="Marx C.J."/>
            <person name="Richardson P."/>
        </authorList>
    </citation>
    <scope>NUCLEOTIDE SEQUENCE [LARGE SCALE GENOMIC DNA]</scope>
    <source>
        <strain>4-46</strain>
    </source>
</reference>
<keyword id="KW-0067">ATP-binding</keyword>
<keyword id="KW-0460">Magnesium</keyword>
<keyword id="KW-0547">Nucleotide-binding</keyword>
<keyword id="KW-0808">Transferase</keyword>
<keyword id="KW-0819">tRNA processing</keyword>
<gene>
    <name evidence="1" type="primary">miaA</name>
    <name type="ordered locus">M446_6189</name>
</gene>